<proteinExistence type="evidence at transcript level"/>
<dbReference type="EMBL" id="EU233887">
    <property type="protein sequence ID" value="ABY71706.1"/>
    <property type="status" value="ALT_INIT"/>
    <property type="molecule type" value="mRNA"/>
</dbReference>
<dbReference type="SMR" id="B1P1F6"/>
<dbReference type="ArachnoServer" id="AS000835">
    <property type="toxin name" value="U19-theraphotoxin-Cg1a"/>
</dbReference>
<dbReference type="GO" id="GO:0005576">
    <property type="term" value="C:extracellular region"/>
    <property type="evidence" value="ECO:0007669"/>
    <property type="project" value="UniProtKB-SubCell"/>
</dbReference>
<dbReference type="GO" id="GO:0008200">
    <property type="term" value="F:ion channel inhibitor activity"/>
    <property type="evidence" value="ECO:0007669"/>
    <property type="project" value="InterPro"/>
</dbReference>
<dbReference type="GO" id="GO:0090729">
    <property type="term" value="F:toxin activity"/>
    <property type="evidence" value="ECO:0007669"/>
    <property type="project" value="UniProtKB-KW"/>
</dbReference>
<dbReference type="InterPro" id="IPR011696">
    <property type="entry name" value="Huwentoxin-1"/>
</dbReference>
<dbReference type="Pfam" id="PF07740">
    <property type="entry name" value="Toxin_12"/>
    <property type="match status" value="1"/>
</dbReference>
<dbReference type="SUPFAM" id="SSF57059">
    <property type="entry name" value="omega toxin-like"/>
    <property type="match status" value="1"/>
</dbReference>
<comment type="function">
    <text>Probable ion channel inhibitor.</text>
</comment>
<comment type="subcellular location">
    <subcellularLocation>
        <location evidence="1">Secreted</location>
    </subcellularLocation>
</comment>
<comment type="tissue specificity">
    <text>Expressed by the venom gland.</text>
</comment>
<comment type="domain">
    <text evidence="2">The presence of a 'disulfide through disulfide knot' structurally defines this protein as a knottin.</text>
</comment>
<comment type="similarity">
    <text evidence="4">Belongs to the neurotoxin 10 (Hwtx-1) family. 38 (Jztx-33) subfamily.</text>
</comment>
<comment type="sequence caution" evidence="4">
    <conflict type="erroneous initiation">
        <sequence resource="EMBL-CDS" id="ABY71706"/>
    </conflict>
    <text>Truncated N-terminus.</text>
</comment>
<feature type="signal peptide" evidence="3">
    <location>
        <begin position="1" status="less than"/>
        <end position="7"/>
    </location>
</feature>
<feature type="propeptide" id="PRO_0000398469" evidence="1">
    <location>
        <begin position="8"/>
        <end position="36"/>
    </location>
</feature>
<feature type="peptide" id="PRO_0000398470" description="U19-theraphotoxin-Cg1a">
    <location>
        <begin position="37"/>
        <end position="74"/>
    </location>
</feature>
<feature type="disulfide bond" evidence="2">
    <location>
        <begin position="39"/>
        <end position="53"/>
    </location>
</feature>
<feature type="disulfide bond" evidence="2">
    <location>
        <begin position="46"/>
        <end position="58"/>
    </location>
</feature>
<feature type="disulfide bond" evidence="2">
    <location>
        <begin position="52"/>
        <end position="66"/>
    </location>
</feature>
<feature type="non-terminal residue">
    <location>
        <position position="1"/>
    </location>
</feature>
<accession>B1P1F6</accession>
<organism>
    <name type="scientific">Chilobrachys guangxiensis</name>
    <name type="common">Chinese earth tiger tarantula</name>
    <name type="synonym">Chilobrachys jingzhao</name>
    <dbReference type="NCBI Taxonomy" id="278060"/>
    <lineage>
        <taxon>Eukaryota</taxon>
        <taxon>Metazoa</taxon>
        <taxon>Ecdysozoa</taxon>
        <taxon>Arthropoda</taxon>
        <taxon>Chelicerata</taxon>
        <taxon>Arachnida</taxon>
        <taxon>Araneae</taxon>
        <taxon>Mygalomorphae</taxon>
        <taxon>Theraphosidae</taxon>
        <taxon>Chilobrachys</taxon>
    </lineage>
</organism>
<name>JZT33_CHIGU</name>
<protein>
    <recommendedName>
        <fullName>U19-theraphotoxin-Cg1a</fullName>
        <shortName>U19-TRTX-Cg1a</shortName>
    </recommendedName>
    <alternativeName>
        <fullName evidence="5">Jingzhaotoxin-33</fullName>
        <shortName evidence="5">JZTX-33</shortName>
    </alternativeName>
</protein>
<reference key="1">
    <citation type="journal article" date="2008" name="Cell. Mol. Life Sci.">
        <title>Molecular diversity and evolution of cystine knot toxins of the tarantula Chilobrachys jingzhao.</title>
        <authorList>
            <person name="Chen J."/>
            <person name="Deng M."/>
            <person name="He Q."/>
            <person name="Meng E."/>
            <person name="Jiang L."/>
            <person name="Liao Z."/>
            <person name="Rong M."/>
            <person name="Liang S."/>
        </authorList>
    </citation>
    <scope>NUCLEOTIDE SEQUENCE [LARGE SCALE MRNA]</scope>
    <source>
        <tissue>Venom gland</tissue>
    </source>
</reference>
<evidence type="ECO:0000250" key="1"/>
<evidence type="ECO:0000250" key="2">
    <source>
        <dbReference type="UniProtKB" id="P0C247"/>
    </source>
</evidence>
<evidence type="ECO:0000255" key="3"/>
<evidence type="ECO:0000305" key="4"/>
<evidence type="ECO:0000312" key="5">
    <source>
        <dbReference type="EMBL" id="ABY71706.1"/>
    </source>
</evidence>
<sequence length="74" mass="8614">IMFVWASAAEVEERGSDQRDSPASLKSMETIFQSEQRECRYLMGGCSKDGDCCEHLVCRTKWPYHCVWDWTFGK</sequence>
<keyword id="KW-1015">Disulfide bond</keyword>
<keyword id="KW-0872">Ion channel impairing toxin</keyword>
<keyword id="KW-0960">Knottin</keyword>
<keyword id="KW-0964">Secreted</keyword>
<keyword id="KW-0732">Signal</keyword>
<keyword id="KW-0800">Toxin</keyword>